<comment type="function">
    <text evidence="5 7 8 9 11 13 14 15 16 17 19 21">Component of the transcription coactivator SAGA complex. SAGA acts as a general cofactor required for essentially all RNA polymerase II transcription (PubMed:10864329, PubMed:25216679, PubMed:28918903). At the promoters, SAGA is required for transcription pre-initiation complex (PIC) recruitment. It influences RNA polymerase II transcriptional activity through different activities such as TBP interaction (via core/TAF module) and promoter selectivity, interaction with transcription activators (via Tra1/SPT module), and chromatin modification through histone acetylation (via HAT module) and deubiquitination (via DUB module) (PubMed:18950642, PubMed:7972120). SAGA preferentially acetylates histones H3 (to form H3K9ac, H3K14ac, H3K18ac and H3K23ac) and H2B and deubiquitinates histone H2B (PubMed:10026213). SAGA interacts with DNA via upstream activating sequences (UASs) (PubMed:28918903). Also identified in a modified version of SAGA named SALSA or SLIK (PubMed:12186975, PubMed:12446794). The cleavage of SPT7 and the absence of the SPT8 subunit in SLIK neither drive any major conformational differences in its structure compared with SAGA, nor significantly affect HAT, DUB, or DNA-binding activities (PubMed:33864814). Component of the ADA histone acetyltransferase complex, which preferentially acetylates nucleosomal histones H3 (to form H3K14ac and H3K18ac) and H2B (PubMed:10026213, PubMed:9224714). Positioned at chromosomal termini to participate in both transcriptional repression and activation in response to nutrient signaling, promoting transcriptional silencing at telomeres and ribosomal DNA (PubMed:19737915). May be involved in response to DNA damage by genotoxic agents (PubMed:15340070).</text>
</comment>
<comment type="subunit">
    <text evidence="6 8 9 12 15 17 18 20 21 22 23">Component of the 1.8 MDa SAGA (Spt-Ada-Gcn5 acetyltransferase) complex, which is composed of 19 subunits TRA1, SPT7, TAF5, NGG1/ADA3, SGF73, SPT20/ADA5, SPT8, TAF12, TAF6, HFI1/ADA1, UBP8, GCN5, ADA2, SPT3, SGF29, TAF10, TAF9, SGF11 and SUS1 (PubMed:9224714, PubMed:9674426, PubMed:9885573). The SAGA complex is composed of 4 modules, namely the HAT (histone acetyltransferase) module (GCN5, ADA2, NGG1/ADA3 and SGF29), the DUB (deubiquitinating) module (UBP8, SGF11, SGF73 and SUS1), the core or TAF (TBP-associated factor) module (TAF5, TAF6, TAF9, TAF10 and TAF12), and the Tra1 or SPT (Suppressor of Ty) module (TRA1, HFI1/ADA1, SPT3, SPT7, SPT8 and SPT20/ADA5). The Tra1/SPT module binds activators, the core module recruits TBP (TATA-binding protein), the HAT module contains the histone H3 acetyltransferase GCN5, and the DUB module comprises the histone H2B deubiquitinase UBP8 (PubMed:25216679). Also identified in an altered form of SAGA, named SALSA (SAGA altered, Spt8 absent) or SLIK (SAGA-like) complex, which contains a C-terminal truncated form of SPT7 and is missing SPT8 (PubMed:12186975, PubMed:12446794, PubMed:15647753). However, it has been shown that the SAGA and SAGA-like SALSA/SLIK transcriptional coactivators are structurally and biochemically equivalent (PubMed:33864814). Component of the 0.8 MDa ADA complex, a HAT complex distinct from SAGA, which at least consists of ADA2, NGG1/ADA3, AHC1, AHC2, SGF29 and GCN5 (PubMed:10490601). Component of an ADA/GCN5 complex that consists of HFI1/ADA1, ADA2, NGG1/ADA3, SPT20/ADA5 and GCN5 and probably is a subcomplex of SAGA (PubMed:7862114, PubMed:9154821).</text>
</comment>
<comment type="interaction">
    <interactant intactId="EBI-2186">
        <id>Q02336</id>
    </interactant>
    <interactant intactId="EBI-7458">
        <id>Q03330</id>
        <label>GCN5</label>
    </interactant>
    <organismsDiffer>false</organismsDiffer>
    <experiments>42</experiments>
</comment>
<comment type="interaction">
    <interactant intactId="EBI-2186">
        <id>Q02336</id>
    </interactant>
    <interactant intactId="EBI-8287">
        <id>Q12060</id>
        <label>HFI1</label>
    </interactant>
    <organismsDiffer>false</organismsDiffer>
    <experiments>26</experiments>
</comment>
<comment type="interaction">
    <interactant intactId="EBI-2186">
        <id>Q02336</id>
    </interactant>
    <interactant intactId="EBI-2192">
        <id>P32494</id>
        <label>NGG1</label>
    </interactant>
    <organismsDiffer>false</organismsDiffer>
    <experiments>29</experiments>
</comment>
<comment type="interaction">
    <interactant intactId="EBI-2186">
        <id>Q02336</id>
    </interactant>
    <interactant intactId="EBI-17372">
        <id>Q00772</id>
        <label>SLT2</label>
    </interactant>
    <organismsDiffer>false</organismsDiffer>
    <experiments>2</experiments>
</comment>
<comment type="interaction">
    <interactant intactId="EBI-2186">
        <id>Q02336</id>
    </interactant>
    <interactant intactId="EBI-24638">
        <id>P38811</id>
        <label>TRA1</label>
    </interactant>
    <organismsDiffer>false</organismsDiffer>
    <experiments>27</experiments>
</comment>
<comment type="subcellular location">
    <subcellularLocation>
        <location>Nucleus</location>
    </subcellularLocation>
</comment>
<comment type="disruption phenotype">
    <text evidence="11">Increased sensitivity to genotoxic agent generated DNA damage.</text>
</comment>
<comment type="miscellaneous">
    <text evidence="10">Present with 1720 molecules/cell in log phase SD medium.</text>
</comment>
<evidence type="ECO:0000255" key="1">
    <source>
        <dbReference type="PROSITE-ProRule" id="PRU00228"/>
    </source>
</evidence>
<evidence type="ECO:0000255" key="2">
    <source>
        <dbReference type="PROSITE-ProRule" id="PRU00247"/>
    </source>
</evidence>
<evidence type="ECO:0000255" key="3">
    <source>
        <dbReference type="PROSITE-ProRule" id="PRU00624"/>
    </source>
</evidence>
<evidence type="ECO:0000256" key="4">
    <source>
        <dbReference type="SAM" id="MobiDB-lite"/>
    </source>
</evidence>
<evidence type="ECO:0000269" key="5">
    <source>
    </source>
</evidence>
<evidence type="ECO:0000269" key="6">
    <source>
    </source>
</evidence>
<evidence type="ECO:0000269" key="7">
    <source>
    </source>
</evidence>
<evidence type="ECO:0000269" key="8">
    <source>
    </source>
</evidence>
<evidence type="ECO:0000269" key="9">
    <source>
    </source>
</evidence>
<evidence type="ECO:0000269" key="10">
    <source>
    </source>
</evidence>
<evidence type="ECO:0000269" key="11">
    <source>
    </source>
</evidence>
<evidence type="ECO:0000269" key="12">
    <source>
    </source>
</evidence>
<evidence type="ECO:0000269" key="13">
    <source>
    </source>
</evidence>
<evidence type="ECO:0000269" key="14">
    <source>
    </source>
</evidence>
<evidence type="ECO:0000269" key="15">
    <source>
    </source>
</evidence>
<evidence type="ECO:0000269" key="16">
    <source>
    </source>
</evidence>
<evidence type="ECO:0000269" key="17">
    <source>
    </source>
</evidence>
<evidence type="ECO:0000269" key="18">
    <source>
    </source>
</evidence>
<evidence type="ECO:0000269" key="19">
    <source>
    </source>
</evidence>
<evidence type="ECO:0000269" key="20">
    <source>
    </source>
</evidence>
<evidence type="ECO:0000269" key="21">
    <source>
    </source>
</evidence>
<evidence type="ECO:0000269" key="22">
    <source>
    </source>
</evidence>
<evidence type="ECO:0000269" key="23">
    <source>
    </source>
</evidence>
<evidence type="ECO:0007744" key="24">
    <source>
        <dbReference type="PDB" id="6CW2"/>
    </source>
</evidence>
<evidence type="ECO:0007744" key="25">
    <source>
        <dbReference type="PDB" id="6CW3"/>
    </source>
</evidence>
<evidence type="ECO:0007829" key="26">
    <source>
        <dbReference type="PDB" id="2ELJ"/>
    </source>
</evidence>
<evidence type="ECO:0007829" key="27">
    <source>
        <dbReference type="PDB" id="6CW3"/>
    </source>
</evidence>
<gene>
    <name type="primary">ADA2</name>
    <name type="ordered locus">YDR448W</name>
    <name type="ORF">D9461.33</name>
</gene>
<dbReference type="EMBL" id="M95396">
    <property type="protein sequence ID" value="AAA34393.1"/>
    <property type="molecule type" value="Genomic_DNA"/>
</dbReference>
<dbReference type="EMBL" id="U33007">
    <property type="protein sequence ID" value="AAB64871.1"/>
    <property type="molecule type" value="Genomic_DNA"/>
</dbReference>
<dbReference type="EMBL" id="BK006938">
    <property type="protein sequence ID" value="DAA12283.1"/>
    <property type="molecule type" value="Genomic_DNA"/>
</dbReference>
<dbReference type="PIR" id="A43252">
    <property type="entry name" value="A43252"/>
</dbReference>
<dbReference type="RefSeq" id="NP_010736.3">
    <property type="nucleotide sequence ID" value="NM_001180756.3"/>
</dbReference>
<dbReference type="PDB" id="2ELJ">
    <property type="method" value="NMR"/>
    <property type="chains" value="A=354-434"/>
</dbReference>
<dbReference type="PDB" id="6CW2">
    <property type="method" value="X-ray"/>
    <property type="resolution" value="2.67 A"/>
    <property type="chains" value="C=1-120"/>
</dbReference>
<dbReference type="PDB" id="6CW3">
    <property type="method" value="X-ray"/>
    <property type="resolution" value="1.98 A"/>
    <property type="chains" value="E/G=2-120"/>
</dbReference>
<dbReference type="PDBsum" id="2ELJ"/>
<dbReference type="PDBsum" id="6CW2"/>
<dbReference type="PDBsum" id="6CW3"/>
<dbReference type="SMR" id="Q02336"/>
<dbReference type="BioGRID" id="32503">
    <property type="interactions" value="316"/>
</dbReference>
<dbReference type="ComplexPortal" id="CPX-608">
    <property type="entry name" value="ADA complex"/>
</dbReference>
<dbReference type="ComplexPortal" id="CPX-656">
    <property type="entry name" value="SAGA complex"/>
</dbReference>
<dbReference type="ComplexPortal" id="CPX-675">
    <property type="entry name" value="SLIK (SAGA-like) complex"/>
</dbReference>
<dbReference type="DIP" id="DIP-183N"/>
<dbReference type="FunCoup" id="Q02336">
    <property type="interactions" value="809"/>
</dbReference>
<dbReference type="IntAct" id="Q02336">
    <property type="interactions" value="168"/>
</dbReference>
<dbReference type="MINT" id="Q02336"/>
<dbReference type="STRING" id="4932.YDR448W"/>
<dbReference type="iPTMnet" id="Q02336"/>
<dbReference type="PaxDb" id="4932-YDR448W"/>
<dbReference type="PeptideAtlas" id="Q02336"/>
<dbReference type="ABCD" id="Q02336">
    <property type="antibodies" value="1 sequenced antibody"/>
</dbReference>
<dbReference type="DNASU" id="852059"/>
<dbReference type="EnsemblFungi" id="YDR448W_mRNA">
    <property type="protein sequence ID" value="YDR448W"/>
    <property type="gene ID" value="YDR448W"/>
</dbReference>
<dbReference type="GeneID" id="852059"/>
<dbReference type="KEGG" id="sce:YDR448W"/>
<dbReference type="AGR" id="SGD:S000002856"/>
<dbReference type="SGD" id="S000002856">
    <property type="gene designation" value="ADA2"/>
</dbReference>
<dbReference type="VEuPathDB" id="FungiDB:YDR448W"/>
<dbReference type="eggNOG" id="KOG0457">
    <property type="taxonomic scope" value="Eukaryota"/>
</dbReference>
<dbReference type="GeneTree" id="ENSGT00940000157318"/>
<dbReference type="HOGENOM" id="CLU_018273_3_0_1"/>
<dbReference type="InParanoid" id="Q02336"/>
<dbReference type="OMA" id="YNGNHRP"/>
<dbReference type="OrthoDB" id="270417at2759"/>
<dbReference type="BioCyc" id="YEAST:G3O-29979-MONOMER"/>
<dbReference type="Reactome" id="R-SCE-5689880">
    <property type="pathway name" value="Ub-specific processing proteases"/>
</dbReference>
<dbReference type="BioGRID-ORCS" id="852059">
    <property type="hits" value="0 hits in 10 CRISPR screens"/>
</dbReference>
<dbReference type="EvolutionaryTrace" id="Q02336"/>
<dbReference type="PRO" id="PR:Q02336"/>
<dbReference type="Proteomes" id="UP000002311">
    <property type="component" value="Chromosome IV"/>
</dbReference>
<dbReference type="RNAct" id="Q02336">
    <property type="molecule type" value="protein"/>
</dbReference>
<dbReference type="GO" id="GO:0140671">
    <property type="term" value="C:ADA complex"/>
    <property type="evidence" value="ECO:0000314"/>
    <property type="project" value="SGD"/>
</dbReference>
<dbReference type="GO" id="GO:0000781">
    <property type="term" value="C:chromosome, telomeric region"/>
    <property type="evidence" value="ECO:0007669"/>
    <property type="project" value="GOC"/>
</dbReference>
<dbReference type="GO" id="GO:0005634">
    <property type="term" value="C:nucleus"/>
    <property type="evidence" value="ECO:0000318"/>
    <property type="project" value="GO_Central"/>
</dbReference>
<dbReference type="GO" id="GO:0000124">
    <property type="term" value="C:SAGA complex"/>
    <property type="evidence" value="ECO:0000314"/>
    <property type="project" value="SGD"/>
</dbReference>
<dbReference type="GO" id="GO:0070461">
    <property type="term" value="C:SAGA-type complex"/>
    <property type="evidence" value="ECO:0000318"/>
    <property type="project" value="GO_Central"/>
</dbReference>
<dbReference type="GO" id="GO:0046695">
    <property type="term" value="C:SLIK (SAGA-like) complex"/>
    <property type="evidence" value="ECO:0000314"/>
    <property type="project" value="SGD"/>
</dbReference>
<dbReference type="GO" id="GO:0003682">
    <property type="term" value="F:chromatin binding"/>
    <property type="evidence" value="ECO:0000314"/>
    <property type="project" value="SGD"/>
</dbReference>
<dbReference type="GO" id="GO:0001786">
    <property type="term" value="F:phosphatidylserine binding"/>
    <property type="evidence" value="ECO:0000314"/>
    <property type="project" value="SGD"/>
</dbReference>
<dbReference type="GO" id="GO:0003713">
    <property type="term" value="F:transcription coactivator activity"/>
    <property type="evidence" value="ECO:0000314"/>
    <property type="project" value="SGD"/>
</dbReference>
<dbReference type="GO" id="GO:0008270">
    <property type="term" value="F:zinc ion binding"/>
    <property type="evidence" value="ECO:0007669"/>
    <property type="project" value="UniProtKB-KW"/>
</dbReference>
<dbReference type="GO" id="GO:0006325">
    <property type="term" value="P:chromatin organization"/>
    <property type="evidence" value="ECO:0000314"/>
    <property type="project" value="SGD"/>
</dbReference>
<dbReference type="GO" id="GO:0006338">
    <property type="term" value="P:chromatin remodeling"/>
    <property type="evidence" value="ECO:0000318"/>
    <property type="project" value="GO_Central"/>
</dbReference>
<dbReference type="GO" id="GO:0000183">
    <property type="term" value="P:rDNA heterochromatin formation"/>
    <property type="evidence" value="ECO:0000315"/>
    <property type="project" value="SGD"/>
</dbReference>
<dbReference type="GO" id="GO:0006357">
    <property type="term" value="P:regulation of transcription by RNA polymerase II"/>
    <property type="evidence" value="ECO:0000314"/>
    <property type="project" value="ComplexPortal"/>
</dbReference>
<dbReference type="GO" id="GO:1990414">
    <property type="term" value="P:replication-born double-strand break repair via sister chromatid exchange"/>
    <property type="evidence" value="ECO:0000315"/>
    <property type="project" value="SGD"/>
</dbReference>
<dbReference type="GO" id="GO:0031509">
    <property type="term" value="P:subtelomeric heterochromatin formation"/>
    <property type="evidence" value="ECO:0000315"/>
    <property type="project" value="SGD"/>
</dbReference>
<dbReference type="CDD" id="cd00167">
    <property type="entry name" value="SANT"/>
    <property type="match status" value="1"/>
</dbReference>
<dbReference type="CDD" id="cd02335">
    <property type="entry name" value="ZZ_ADA2"/>
    <property type="match status" value="1"/>
</dbReference>
<dbReference type="FunFam" id="1.10.10.10:FF:000087">
    <property type="entry name" value="Transcriptional adapter 2"/>
    <property type="match status" value="1"/>
</dbReference>
<dbReference type="FunFam" id="1.10.10.60:FF:000115">
    <property type="entry name" value="Transcriptional adapter 2"/>
    <property type="match status" value="1"/>
</dbReference>
<dbReference type="FunFam" id="3.30.60.90:FF:000008">
    <property type="entry name" value="Transcriptional adapter 2"/>
    <property type="match status" value="1"/>
</dbReference>
<dbReference type="Gene3D" id="3.30.60.90">
    <property type="match status" value="1"/>
</dbReference>
<dbReference type="Gene3D" id="1.10.10.60">
    <property type="entry name" value="Homeodomain-like"/>
    <property type="match status" value="1"/>
</dbReference>
<dbReference type="Gene3D" id="1.10.10.10">
    <property type="entry name" value="Winged helix-like DNA-binding domain superfamily/Winged helix DNA-binding domain"/>
    <property type="match status" value="1"/>
</dbReference>
<dbReference type="InterPro" id="IPR041983">
    <property type="entry name" value="ADA2-like_ZZ"/>
</dbReference>
<dbReference type="InterPro" id="IPR016827">
    <property type="entry name" value="Ada2/TADA2"/>
</dbReference>
<dbReference type="InterPro" id="IPR009057">
    <property type="entry name" value="Homeodomain-like_sf"/>
</dbReference>
<dbReference type="InterPro" id="IPR001005">
    <property type="entry name" value="SANT/Myb"/>
</dbReference>
<dbReference type="InterPro" id="IPR017884">
    <property type="entry name" value="SANT_dom"/>
</dbReference>
<dbReference type="InterPro" id="IPR007526">
    <property type="entry name" value="SWIRM"/>
</dbReference>
<dbReference type="InterPro" id="IPR055141">
    <property type="entry name" value="TADA2A_B-like_dom"/>
</dbReference>
<dbReference type="InterPro" id="IPR036388">
    <property type="entry name" value="WH-like_DNA-bd_sf"/>
</dbReference>
<dbReference type="InterPro" id="IPR000433">
    <property type="entry name" value="Znf_ZZ"/>
</dbReference>
<dbReference type="InterPro" id="IPR043145">
    <property type="entry name" value="Znf_ZZ_sf"/>
</dbReference>
<dbReference type="PANTHER" id="PTHR12374:SF20">
    <property type="entry name" value="TRANSCRIPTIONAL ADAPTER 2-ALPHA"/>
    <property type="match status" value="1"/>
</dbReference>
<dbReference type="PANTHER" id="PTHR12374">
    <property type="entry name" value="TRANSCRIPTIONAL ADAPTOR 2 ADA2 -RELATED"/>
    <property type="match status" value="1"/>
</dbReference>
<dbReference type="Pfam" id="PF00249">
    <property type="entry name" value="Myb_DNA-binding"/>
    <property type="match status" value="1"/>
</dbReference>
<dbReference type="Pfam" id="PF04433">
    <property type="entry name" value="SWIRM"/>
    <property type="match status" value="1"/>
</dbReference>
<dbReference type="Pfam" id="PF22941">
    <property type="entry name" value="TADA2A-like_3rd"/>
    <property type="match status" value="1"/>
</dbReference>
<dbReference type="Pfam" id="PF00569">
    <property type="entry name" value="ZZ"/>
    <property type="match status" value="1"/>
</dbReference>
<dbReference type="PIRSF" id="PIRSF025024">
    <property type="entry name" value="Transcriptional_adaptor_2"/>
    <property type="match status" value="1"/>
</dbReference>
<dbReference type="SMART" id="SM00717">
    <property type="entry name" value="SANT"/>
    <property type="match status" value="1"/>
</dbReference>
<dbReference type="SMART" id="SM00291">
    <property type="entry name" value="ZnF_ZZ"/>
    <property type="match status" value="1"/>
</dbReference>
<dbReference type="SUPFAM" id="SSF46689">
    <property type="entry name" value="Homeodomain-like"/>
    <property type="match status" value="2"/>
</dbReference>
<dbReference type="SUPFAM" id="SSF57850">
    <property type="entry name" value="RING/U-box"/>
    <property type="match status" value="1"/>
</dbReference>
<dbReference type="PROSITE" id="PS51293">
    <property type="entry name" value="SANT"/>
    <property type="match status" value="1"/>
</dbReference>
<dbReference type="PROSITE" id="PS50934">
    <property type="entry name" value="SWIRM"/>
    <property type="match status" value="1"/>
</dbReference>
<dbReference type="PROSITE" id="PS01357">
    <property type="entry name" value="ZF_ZZ_1"/>
    <property type="match status" value="1"/>
</dbReference>
<dbReference type="PROSITE" id="PS50135">
    <property type="entry name" value="ZF_ZZ_2"/>
    <property type="match status" value="1"/>
</dbReference>
<keyword id="KW-0002">3D-structure</keyword>
<keyword id="KW-0479">Metal-binding</keyword>
<keyword id="KW-0539">Nucleus</keyword>
<keyword id="KW-1185">Reference proteome</keyword>
<keyword id="KW-0804">Transcription</keyword>
<keyword id="KW-0805">Transcription regulation</keyword>
<keyword id="KW-0862">Zinc</keyword>
<keyword id="KW-0863">Zinc-finger</keyword>
<feature type="chain" id="PRO_0000197082" description="SAGA complex subunit ADA2">
    <location>
        <begin position="1"/>
        <end position="434"/>
    </location>
</feature>
<feature type="domain" description="SANT" evidence="3">
    <location>
        <begin position="60"/>
        <end position="112"/>
    </location>
</feature>
<feature type="domain" description="SWIRM" evidence="2">
    <location>
        <begin position="349"/>
        <end position="434"/>
    </location>
</feature>
<feature type="zinc finger region" description="ZZ-type" evidence="1">
    <location>
        <begin position="2"/>
        <end position="58"/>
    </location>
</feature>
<feature type="region of interest" description="Disordered" evidence="4">
    <location>
        <begin position="325"/>
        <end position="352"/>
    </location>
</feature>
<feature type="compositionally biased region" description="Polar residues" evidence="4">
    <location>
        <begin position="325"/>
        <end position="347"/>
    </location>
</feature>
<feature type="binding site" evidence="24 25">
    <location>
        <position position="7"/>
    </location>
    <ligand>
        <name>Zn(2+)</name>
        <dbReference type="ChEBI" id="CHEBI:29105"/>
        <label>1</label>
    </ligand>
</feature>
<feature type="binding site" evidence="24 25">
    <location>
        <position position="10"/>
    </location>
    <ligand>
        <name>Zn(2+)</name>
        <dbReference type="ChEBI" id="CHEBI:29105"/>
        <label>1</label>
    </ligand>
</feature>
<feature type="binding site" evidence="24 25">
    <location>
        <position position="22"/>
    </location>
    <ligand>
        <name>Zn(2+)</name>
        <dbReference type="ChEBI" id="CHEBI:29105"/>
        <label>2</label>
    </ligand>
</feature>
<feature type="binding site" evidence="24 25">
    <location>
        <position position="25"/>
    </location>
    <ligand>
        <name>Zn(2+)</name>
        <dbReference type="ChEBI" id="CHEBI:29105"/>
        <label>2</label>
    </ligand>
</feature>
<feature type="binding site" evidence="24 25">
    <location>
        <position position="31"/>
    </location>
    <ligand>
        <name>Zn(2+)</name>
        <dbReference type="ChEBI" id="CHEBI:29105"/>
        <label>1</label>
    </ligand>
</feature>
<feature type="binding site" evidence="24 25">
    <location>
        <position position="34"/>
    </location>
    <ligand>
        <name>Zn(2+)</name>
        <dbReference type="ChEBI" id="CHEBI:29105"/>
        <label>1</label>
    </ligand>
</feature>
<feature type="binding site" evidence="24 25">
    <location>
        <position position="44"/>
    </location>
    <ligand>
        <name>Zn(2+)</name>
        <dbReference type="ChEBI" id="CHEBI:29105"/>
        <label>2</label>
    </ligand>
</feature>
<feature type="binding site" evidence="24 25">
    <location>
        <position position="48"/>
    </location>
    <ligand>
        <name>Zn(2+)</name>
        <dbReference type="ChEBI" id="CHEBI:29105"/>
        <label>2</label>
    </ligand>
</feature>
<feature type="turn" evidence="27">
    <location>
        <begin position="8"/>
        <end position="10"/>
    </location>
</feature>
<feature type="strand" evidence="27">
    <location>
        <begin position="19"/>
        <end position="25"/>
    </location>
</feature>
<feature type="helix" evidence="27">
    <location>
        <begin position="32"/>
        <end position="36"/>
    </location>
</feature>
<feature type="strand" evidence="27">
    <location>
        <begin position="50"/>
        <end position="53"/>
    </location>
</feature>
<feature type="strand" evidence="27">
    <location>
        <begin position="63"/>
        <end position="65"/>
    </location>
</feature>
<feature type="helix" evidence="27">
    <location>
        <begin position="67"/>
        <end position="80"/>
    </location>
</feature>
<feature type="helix" evidence="27">
    <location>
        <begin position="85"/>
        <end position="92"/>
    </location>
</feature>
<feature type="helix" evidence="27">
    <location>
        <begin position="97"/>
        <end position="107"/>
    </location>
</feature>
<feature type="turn" evidence="27">
    <location>
        <begin position="108"/>
        <end position="110"/>
    </location>
</feature>
<feature type="turn" evidence="27">
    <location>
        <begin position="112"/>
        <end position="115"/>
    </location>
</feature>
<feature type="helix" evidence="26">
    <location>
        <begin position="358"/>
        <end position="361"/>
    </location>
</feature>
<feature type="strand" evidence="26">
    <location>
        <begin position="367"/>
        <end position="369"/>
    </location>
</feature>
<feature type="helix" evidence="26">
    <location>
        <begin position="371"/>
        <end position="379"/>
    </location>
</feature>
<feature type="helix" evidence="26">
    <location>
        <begin position="384"/>
        <end position="401"/>
    </location>
</feature>
<feature type="helix" evidence="26">
    <location>
        <begin position="407"/>
        <end position="413"/>
    </location>
</feature>
<feature type="helix" evidence="26">
    <location>
        <begin position="418"/>
        <end position="430"/>
    </location>
</feature>
<proteinExistence type="evidence at protein level"/>
<reference key="1">
    <citation type="journal article" date="1992" name="Cell">
        <title>Genetic isolation of ADA2: a potential transcriptional adaptor required for function of certain acidic activation domains.</title>
        <authorList>
            <person name="Berger S.L."/>
            <person name="Pina B."/>
            <person name="Silverman N."/>
            <person name="Marcus G.A."/>
            <person name="Agapite J."/>
            <person name="Regier J.L."/>
            <person name="Triezenberg S.J."/>
            <person name="Guarente L."/>
        </authorList>
    </citation>
    <scope>NUCLEOTIDE SEQUENCE [GENOMIC DNA]</scope>
</reference>
<reference key="2">
    <citation type="journal article" date="1997" name="Nature">
        <title>The nucleotide sequence of Saccharomyces cerevisiae chromosome IV.</title>
        <authorList>
            <person name="Jacq C."/>
            <person name="Alt-Moerbe J."/>
            <person name="Andre B."/>
            <person name="Arnold W."/>
            <person name="Bahr A."/>
            <person name="Ballesta J.P.G."/>
            <person name="Bargues M."/>
            <person name="Baron L."/>
            <person name="Becker A."/>
            <person name="Biteau N."/>
            <person name="Bloecker H."/>
            <person name="Blugeon C."/>
            <person name="Boskovic J."/>
            <person name="Brandt P."/>
            <person name="Brueckner M."/>
            <person name="Buitrago M.J."/>
            <person name="Coster F."/>
            <person name="Delaveau T."/>
            <person name="del Rey F."/>
            <person name="Dujon B."/>
            <person name="Eide L.G."/>
            <person name="Garcia-Cantalejo J.M."/>
            <person name="Goffeau A."/>
            <person name="Gomez-Peris A."/>
            <person name="Granotier C."/>
            <person name="Hanemann V."/>
            <person name="Hankeln T."/>
            <person name="Hoheisel J.D."/>
            <person name="Jaeger W."/>
            <person name="Jimenez A."/>
            <person name="Jonniaux J.-L."/>
            <person name="Kraemer C."/>
            <person name="Kuester H."/>
            <person name="Laamanen P."/>
            <person name="Legros Y."/>
            <person name="Louis E.J."/>
            <person name="Moeller-Rieker S."/>
            <person name="Monnet A."/>
            <person name="Moro M."/>
            <person name="Mueller-Auer S."/>
            <person name="Nussbaumer B."/>
            <person name="Paricio N."/>
            <person name="Paulin L."/>
            <person name="Perea J."/>
            <person name="Perez-Alonso M."/>
            <person name="Perez-Ortin J.E."/>
            <person name="Pohl T.M."/>
            <person name="Prydz H."/>
            <person name="Purnelle B."/>
            <person name="Rasmussen S.W."/>
            <person name="Remacha M.A."/>
            <person name="Revuelta J.L."/>
            <person name="Rieger M."/>
            <person name="Salom D."/>
            <person name="Saluz H.P."/>
            <person name="Saiz J.E."/>
            <person name="Saren A.-M."/>
            <person name="Schaefer M."/>
            <person name="Scharfe M."/>
            <person name="Schmidt E.R."/>
            <person name="Schneider C."/>
            <person name="Scholler P."/>
            <person name="Schwarz S."/>
            <person name="Soler-Mira A."/>
            <person name="Urrestarazu L.A."/>
            <person name="Verhasselt P."/>
            <person name="Vissers S."/>
            <person name="Voet M."/>
            <person name="Volckaert G."/>
            <person name="Wagner G."/>
            <person name="Wambutt R."/>
            <person name="Wedler E."/>
            <person name="Wedler H."/>
            <person name="Woelfl S."/>
            <person name="Harris D.E."/>
            <person name="Bowman S."/>
            <person name="Brown D."/>
            <person name="Churcher C.M."/>
            <person name="Connor R."/>
            <person name="Dedman K."/>
            <person name="Gentles S."/>
            <person name="Hamlin N."/>
            <person name="Hunt S."/>
            <person name="Jones L."/>
            <person name="McDonald S."/>
            <person name="Murphy L.D."/>
            <person name="Niblett D."/>
            <person name="Odell C."/>
            <person name="Oliver K."/>
            <person name="Rajandream M.A."/>
            <person name="Richards C."/>
            <person name="Shore L."/>
            <person name="Walsh S.V."/>
            <person name="Barrell B.G."/>
            <person name="Dietrich F.S."/>
            <person name="Mulligan J.T."/>
            <person name="Allen E."/>
            <person name="Araujo R."/>
            <person name="Aviles E."/>
            <person name="Berno A."/>
            <person name="Carpenter J."/>
            <person name="Chen E."/>
            <person name="Cherry J.M."/>
            <person name="Chung E."/>
            <person name="Duncan M."/>
            <person name="Hunicke-Smith S."/>
            <person name="Hyman R.W."/>
            <person name="Komp C."/>
            <person name="Lashkari D."/>
            <person name="Lew H."/>
            <person name="Lin D."/>
            <person name="Mosedale D."/>
            <person name="Nakahara K."/>
            <person name="Namath A."/>
            <person name="Oefner P."/>
            <person name="Oh C."/>
            <person name="Petel F.X."/>
            <person name="Roberts D."/>
            <person name="Schramm S."/>
            <person name="Schroeder M."/>
            <person name="Shogren T."/>
            <person name="Shroff N."/>
            <person name="Winant A."/>
            <person name="Yelton M.A."/>
            <person name="Botstein D."/>
            <person name="Davis R.W."/>
            <person name="Johnston M."/>
            <person name="Andrews S."/>
            <person name="Brinkman R."/>
            <person name="Cooper J."/>
            <person name="Ding H."/>
            <person name="Du Z."/>
            <person name="Favello A."/>
            <person name="Fulton L."/>
            <person name="Gattung S."/>
            <person name="Greco T."/>
            <person name="Hallsworth K."/>
            <person name="Hawkins J."/>
            <person name="Hillier L.W."/>
            <person name="Jier M."/>
            <person name="Johnson D."/>
            <person name="Johnston L."/>
            <person name="Kirsten J."/>
            <person name="Kucaba T."/>
            <person name="Langston Y."/>
            <person name="Latreille P."/>
            <person name="Le T."/>
            <person name="Mardis E."/>
            <person name="Menezes S."/>
            <person name="Miller N."/>
            <person name="Nhan M."/>
            <person name="Pauley A."/>
            <person name="Peluso D."/>
            <person name="Rifkin L."/>
            <person name="Riles L."/>
            <person name="Taich A."/>
            <person name="Trevaskis E."/>
            <person name="Vignati D."/>
            <person name="Wilcox L."/>
            <person name="Wohldman P."/>
            <person name="Vaudin M."/>
            <person name="Wilson R."/>
            <person name="Waterston R."/>
            <person name="Albermann K."/>
            <person name="Hani J."/>
            <person name="Heumann K."/>
            <person name="Kleine K."/>
            <person name="Mewes H.-W."/>
            <person name="Zollner A."/>
            <person name="Zaccaria P."/>
        </authorList>
    </citation>
    <scope>NUCLEOTIDE SEQUENCE [LARGE SCALE GENOMIC DNA]</scope>
    <source>
        <strain>ATCC 204508 / S288c</strain>
    </source>
</reference>
<reference key="3">
    <citation type="journal article" date="2014" name="G3 (Bethesda)">
        <title>The reference genome sequence of Saccharomyces cerevisiae: Then and now.</title>
        <authorList>
            <person name="Engel S.R."/>
            <person name="Dietrich F.S."/>
            <person name="Fisk D.G."/>
            <person name="Binkley G."/>
            <person name="Balakrishnan R."/>
            <person name="Costanzo M.C."/>
            <person name="Dwight S.S."/>
            <person name="Hitz B.C."/>
            <person name="Karra K."/>
            <person name="Nash R.S."/>
            <person name="Weng S."/>
            <person name="Wong E.D."/>
            <person name="Lloyd P."/>
            <person name="Skrzypek M.S."/>
            <person name="Miyasato S.R."/>
            <person name="Simison M."/>
            <person name="Cherry J.M."/>
        </authorList>
    </citation>
    <scope>GENOME REANNOTATION</scope>
    <source>
        <strain>ATCC 204508 / S288c</strain>
    </source>
</reference>
<reference key="4">
    <citation type="journal article" date="1994" name="EMBO J.">
        <title>Functional similarity and physical association between GCN5 and ADA2: putative transcriptional adaptors.</title>
        <authorList>
            <person name="Marcus G.A."/>
            <person name="Silverman N."/>
            <person name="Berger S.L."/>
            <person name="Horiuchi J."/>
            <person name="Guarente L."/>
        </authorList>
    </citation>
    <scope>INTERACTION WITH GCN5</scope>
</reference>
<reference key="5">
    <citation type="journal article" date="1994" name="Proc. Natl. Acad. Sci. U.S.A.">
        <title>Yeast ADA2 protein binds to the VP16 protein activation domain and activates transcription.</title>
        <authorList>
            <person name="Silverman N."/>
            <person name="Agapite J."/>
            <person name="Guarente L."/>
        </authorList>
    </citation>
    <scope>FUNCTION</scope>
</reference>
<reference key="6">
    <citation type="journal article" date="1995" name="Mol. Cell. Biol.">
        <title>ADA3, a putative transcriptional adaptor, consists of two separable domains and interacts with ADA2 and GCN5 in a trimeric complex.</title>
        <authorList>
            <person name="Horiuchi J."/>
            <person name="Silverman N."/>
            <person name="Marcus G.A."/>
            <person name="Guarente L."/>
        </authorList>
    </citation>
    <scope>SUBUNIT</scope>
</reference>
<reference key="7">
    <citation type="journal article" date="1997" name="Genes Dev.">
        <title>Yeast Gcn5 functions in two multisubunit complexes to acetylate nucleosomal histones: characterization of an Ada complex and the SAGA (Spt/Ada) complex.</title>
        <authorList>
            <person name="Grant P.A."/>
            <person name="Duggan L."/>
            <person name="Cote J."/>
            <person name="Roberts S.M."/>
            <person name="Brownell J.E."/>
            <person name="Candau R."/>
            <person name="Ohba R."/>
            <person name="Owen-Hughes T."/>
            <person name="Allis C.D."/>
            <person name="Winston F."/>
            <person name="Berger S.L."/>
            <person name="Workman J.L."/>
        </authorList>
    </citation>
    <scope>FUNCTION</scope>
</reference>
<reference key="8">
    <citation type="journal article" date="1997" name="Mol. Cell. Biol.">
        <title>ADA1, a novel component of the ADA/GCN5 complex, has broader effects than GCN5, ADA2, or ADA3.</title>
        <authorList>
            <person name="Horiuchi J."/>
            <person name="Silverman N."/>
            <person name="Pina B."/>
            <person name="Marcus G.A."/>
            <person name="Guarente L."/>
        </authorList>
    </citation>
    <scope>IDENTIFICATION IN THE ADA/GCN5 COMPLEX</scope>
    <source>
        <strain>ATCC MYA-3516 / BWG1-7A</strain>
    </source>
</reference>
<reference key="9">
    <citation type="journal article" date="1998" name="Cell">
        <title>A subset of TAF(II)s are integral components of the SAGA complex required for nucleosome acetylation and transcriptional stimulation.</title>
        <authorList>
            <person name="Grant P.A."/>
            <person name="Schieltz D."/>
            <person name="Pray-Grant M.G."/>
            <person name="Steger D.J."/>
            <person name="Reese J.C."/>
            <person name="Yates J.R. III"/>
            <person name="Workman J.L."/>
        </authorList>
    </citation>
    <scope>IDENTIFICATION IN THE SAGA COMPLEX</scope>
    <scope>IDENTIFICATION BY MASS SPECTROMETRY</scope>
</reference>
<reference key="10">
    <citation type="journal article" date="1998" name="Mol. Cell">
        <title>The ATM-related cofactor Tra1 is a component of the purified SAGA complex.</title>
        <authorList>
            <person name="Grant P.A."/>
            <person name="Schieltz D."/>
            <person name="Pray-Grant M.G."/>
            <person name="Yates J.R. III"/>
            <person name="Workman J.L."/>
        </authorList>
    </citation>
    <scope>IDENTIFICATION IN A SAGA COMPLEX WITH SPT7; HFI1; SPT8; GCN5; SPT20; SPT2; ADA3 AND TRA1</scope>
</reference>
<reference key="11">
    <citation type="journal article" date="1999" name="J. Biol. Chem.">
        <title>Expanded lysine acetylation specificity of Gcn5 in native complexes.</title>
        <authorList>
            <person name="Grant P.A."/>
            <person name="Eberharter A."/>
            <person name="John S."/>
            <person name="Cook R.G."/>
            <person name="Turner B.M."/>
            <person name="Workman J.L."/>
        </authorList>
    </citation>
    <scope>FUNCTION IN HISTONE ACETYLATION AT THE SAGA COMPLEX</scope>
    <scope>FUNCTION IN HISTONE ACETYLATION AT THE ADA COMPLEX</scope>
</reference>
<reference key="12">
    <citation type="journal article" date="1999" name="Mol. Cell. Biol.">
        <title>The ADA complex is a distinct histone acetyltransferase complex in Saccharomyces cerevisiae.</title>
        <authorList>
            <person name="Eberharter A."/>
            <person name="Sterner D.E."/>
            <person name="Schieltz D."/>
            <person name="Hassan A."/>
            <person name="Yates J.R. III"/>
            <person name="Berger S.L."/>
            <person name="Workman J.L."/>
        </authorList>
    </citation>
    <scope>IDENTIFICATION IN THE ADA COMPLEX</scope>
    <scope>IDENTIFICATION BY MASS SPECTROMETRY</scope>
</reference>
<reference key="13">
    <citation type="journal article" date="2000" name="Nature">
        <title>Redundant roles for the TFIID and SAGA complexes in global transcription.</title>
        <authorList>
            <person name="Lee T.I."/>
            <person name="Causton H.C."/>
            <person name="Holstege F.C."/>
            <person name="Shen W.C."/>
            <person name="Hannett N."/>
            <person name="Jennings E.G."/>
            <person name="Winston F."/>
            <person name="Green M.R."/>
            <person name="Young R.A."/>
        </authorList>
    </citation>
    <scope>FUNCTION</scope>
</reference>
<reference key="14">
    <citation type="journal article" date="2002" name="Mol. Cell. Biol.">
        <title>The novel SLIK histone acetyltransferase complex functions in the yeast retrograde response pathway.</title>
        <authorList>
            <person name="Pray-Grant M.G."/>
            <person name="Schieltz D."/>
            <person name="McMahon S.J."/>
            <person name="Wood J.M."/>
            <person name="Kennedy E.L."/>
            <person name="Cook R.G."/>
            <person name="Workman J.L."/>
            <person name="Yates J.R. III"/>
            <person name="Grant P.A."/>
        </authorList>
    </citation>
    <scope>IDENTIFICATION IN THE SLIK COMPLEX</scope>
</reference>
<reference key="15">
    <citation type="journal article" date="2002" name="Proc. Natl. Acad. Sci. U.S.A.">
        <title>SALSA, a variant of yeast SAGA, contains truncated Spt7, which correlates with activated transcription.</title>
        <authorList>
            <person name="Sterner D.E."/>
            <person name="Belotserkovskaya R."/>
            <person name="Berger S.L."/>
        </authorList>
    </citation>
    <scope>IDENTIFICATION IN THE SALSA COMPLEX</scope>
</reference>
<reference key="16">
    <citation type="journal article" date="2003" name="Nature">
        <title>Global analysis of protein expression in yeast.</title>
        <authorList>
            <person name="Ghaemmaghami S."/>
            <person name="Huh W.-K."/>
            <person name="Bower K."/>
            <person name="Howson R.W."/>
            <person name="Belle A."/>
            <person name="Dephoure N."/>
            <person name="O'Shea E.K."/>
            <person name="Weissman J.S."/>
        </authorList>
    </citation>
    <scope>LEVEL OF PROTEIN EXPRESSION [LARGE SCALE ANALYSIS]</scope>
</reference>
<reference key="17">
    <citation type="journal article" date="2004" name="Mol. Cell. Biol.">
        <title>Drosophila Ada2b is required for viability and normal histone H3 acetylation.</title>
        <authorList>
            <person name="Qi D."/>
            <person name="Larsson J."/>
            <person name="Mannervik M."/>
        </authorList>
    </citation>
    <scope>FUNCTION</scope>
    <scope>DISRUPTION PHENOTYPE</scope>
</reference>
<reference key="18">
    <citation type="journal article" date="2005" name="Nature">
        <title>Chd1 chromodomain links histone H3 methylation with SAGA- and SLIK-dependent acetylation.</title>
        <authorList>
            <person name="Pray-Grant M.G."/>
            <person name="Daniel J.A."/>
            <person name="Schieltz D."/>
            <person name="Yates J.R. III"/>
            <person name="Grant P.A."/>
        </authorList>
    </citation>
    <scope>IDENTIFICATION IN THE SLIK COMPLEX</scope>
</reference>
<reference key="19">
    <citation type="journal article" date="2008" name="J. Mol. Biol.">
        <title>A conserved central region of yeast Ada2 regulates the histone acetyltransferase activity of Gcn5 and interacts with phospholipids.</title>
        <authorList>
            <person name="Hoke S.M."/>
            <person name="Genereaux J."/>
            <person name="Liang G."/>
            <person name="Brandl C.J."/>
        </authorList>
    </citation>
    <scope>FUNCTION</scope>
</reference>
<reference key="20">
    <citation type="journal article" date="2009" name="Mol. Cell. Biol.">
        <title>The SAGA subunit Ada2 functions in transcriptional silencing.</title>
        <authorList>
            <person name="Jacobson S."/>
            <person name="Pillus L."/>
        </authorList>
    </citation>
    <scope>FUNCTION</scope>
</reference>
<reference key="21">
    <citation type="journal article" date="2014" name="EMBO J.">
        <title>Architecture of the Saccharomyces cerevisiae SAGA transcription coactivator complex.</title>
        <authorList>
            <person name="Han Y."/>
            <person name="Luo J."/>
            <person name="Ranish J."/>
            <person name="Hahn S."/>
        </authorList>
    </citation>
    <scope>SUBUNIT</scope>
</reference>
<reference key="22">
    <citation type="journal article" date="2017" name="Mol. Cell">
        <title>SAGA is a general cofactor for RNA polymerase II transcription.</title>
        <authorList>
            <person name="Baptista T."/>
            <person name="Gruenberg S."/>
            <person name="Minoungou N."/>
            <person name="Koster M.J.E."/>
            <person name="Timmers H.T.M."/>
            <person name="Hahn S."/>
            <person name="Devys D."/>
            <person name="Tora L."/>
        </authorList>
    </citation>
    <scope>FUNCTION</scope>
</reference>
<reference key="23">
    <citation type="journal article" date="2021" name="J. Biol. Chem.">
        <title>SAGA and SAGA-like SLIK transcriptional coactivators are structurally and biochemically equivalent.</title>
        <authorList>
            <person name="Adamus K."/>
            <person name="Reboul C."/>
            <person name="Voss J."/>
            <person name="Huang C."/>
            <person name="Schittenhelm R.B."/>
            <person name="Le S.N."/>
            <person name="Ellisdon A.M."/>
            <person name="Elmlund H."/>
            <person name="Boudes M."/>
            <person name="Elmlund D."/>
        </authorList>
    </citation>
    <scope>FUNCTION</scope>
    <scope>SUBUNIT</scope>
</reference>
<reference key="24">
    <citation type="journal article" date="2004" name="Mol. Cell">
        <title>Molecular architecture of the S. cerevisiae SAGA complex.</title>
        <authorList>
            <person name="Wu P.Y."/>
            <person name="Ruhlmann C."/>
            <person name="Winston F."/>
            <person name="Schultz P."/>
        </authorList>
    </citation>
    <scope>3D-STRUCTURE MODELING OF THE SAGA COMPLEX</scope>
</reference>
<reference key="25">
    <citation type="submission" date="2007-10" db="PDB data bank">
        <title>Solution structure of the SWIRM domain of baker's yeast transcriptional adapter 2.</title>
        <authorList>
            <consortium name="RIKEN structural genomics initiative (RSGI)"/>
        </authorList>
    </citation>
    <scope>STRUCTURE BY NMR OF 348-434</scope>
</reference>
<reference evidence="24 25" key="26">
    <citation type="journal article" date="2018" name="Proc. Natl. Acad. Sci. U.S.A.">
        <title>Structural basis for activation of SAGA histone acetyltransferase Gcn5 by partner subunit Ada2.</title>
        <authorList>
            <person name="Sun J."/>
            <person name="Paduch M."/>
            <person name="Kim S.A."/>
            <person name="Kramer R.M."/>
            <person name="Barrios A.F."/>
            <person name="Lu V."/>
            <person name="Luke J."/>
            <person name="Usatyuk S."/>
            <person name="Kossiakoff A.A."/>
            <person name="Tan S."/>
        </authorList>
    </citation>
    <scope>X-RAY CRYSTALLOGRAPHY (1.98 ANGSTROMS) OF 2-120 IN COMPLEX WITH ZN(2+)</scope>
</reference>
<sequence length="434" mass="50569">MSNKFHCDVCSADCTNRVRVSCAICPEYDLCVPCFSQGSYTGKHRPYHDYRIIETNSYPILCPDWGADEELQLIKGAQTLGLGNWQDIADHIGSRGKEEVKEHYLKYYLESKYYPIPDITQNIHVPQDEFLEQRRHRIESFRERPLEPPRKPMASVPSCHEVQGFMPGRLEFETEFENEAEGPVKDMVFEPDDQPLDIELKFAILDIYNSRLTTRAEKKRLLFENHLMDYRKLQAIDKKRSKEAKELYNRIKPFARVMTAQDFEEFSKDILEELHCRARIQQLQEWRSNGLTTLEAGLKYERDKQARISSFEKFGASTAASLSEGNSRYRSNSAHRSNAEYSQNYSENGGRKKNMTISDIQHAPDYALLSNDEQQLCIQLKILPKPYLVLKEVMFRELLKTGGNLSKSACRELLNIDPIKANRIYDFFQSQNWM</sequence>
<protein>
    <recommendedName>
        <fullName>SAGA complex subunit ADA2</fullName>
    </recommendedName>
    <alternativeName>
        <fullName>Transcriptional adapter 2</fullName>
    </alternativeName>
</protein>
<accession>Q02336</accession>
<accession>D6VT73</accession>
<name>ADA2_YEAST</name>
<organism>
    <name type="scientific">Saccharomyces cerevisiae (strain ATCC 204508 / S288c)</name>
    <name type="common">Baker's yeast</name>
    <dbReference type="NCBI Taxonomy" id="559292"/>
    <lineage>
        <taxon>Eukaryota</taxon>
        <taxon>Fungi</taxon>
        <taxon>Dikarya</taxon>
        <taxon>Ascomycota</taxon>
        <taxon>Saccharomycotina</taxon>
        <taxon>Saccharomycetes</taxon>
        <taxon>Saccharomycetales</taxon>
        <taxon>Saccharomycetaceae</taxon>
        <taxon>Saccharomyces</taxon>
    </lineage>
</organism>